<keyword id="KW-0004">4Fe-4S</keyword>
<keyword id="KW-0028">Amino-acid biosynthesis</keyword>
<keyword id="KW-0100">Branched-chain amino acid biosynthesis</keyword>
<keyword id="KW-0408">Iron</keyword>
<keyword id="KW-0411">Iron-sulfur</keyword>
<keyword id="KW-0432">Leucine biosynthesis</keyword>
<keyword id="KW-0456">Lyase</keyword>
<keyword id="KW-0479">Metal-binding</keyword>
<comment type="function">
    <text evidence="1">Catalyzes the isomerization between 2-isopropylmalate and 3-isopropylmalate, via the formation of 2-isopropylmaleate.</text>
</comment>
<comment type="catalytic activity">
    <reaction evidence="1">
        <text>(2R,3S)-3-isopropylmalate = (2S)-2-isopropylmalate</text>
        <dbReference type="Rhea" id="RHEA:32287"/>
        <dbReference type="ChEBI" id="CHEBI:1178"/>
        <dbReference type="ChEBI" id="CHEBI:35121"/>
        <dbReference type="EC" id="4.2.1.33"/>
    </reaction>
</comment>
<comment type="cofactor">
    <cofactor evidence="1">
        <name>[4Fe-4S] cluster</name>
        <dbReference type="ChEBI" id="CHEBI:49883"/>
    </cofactor>
    <text evidence="1">Binds 1 [4Fe-4S] cluster per subunit.</text>
</comment>
<comment type="pathway">
    <text evidence="1">Amino-acid biosynthesis; L-leucine biosynthesis; L-leucine from 3-methyl-2-oxobutanoate: step 2/4.</text>
</comment>
<comment type="subunit">
    <text evidence="1">Heterodimer of LeuC and LeuD.</text>
</comment>
<comment type="similarity">
    <text evidence="1">Belongs to the aconitase/IPM isomerase family. LeuC type 1 subfamily.</text>
</comment>
<comment type="sequence caution" evidence="2">
    <conflict type="erroneous initiation">
        <sequence resource="EMBL-CDS" id="ABL02143"/>
    </conflict>
</comment>
<sequence>MTQTLYDKLMNAHVIRRDNSTELIYIDRQLIHEVTSPQAFEGLAIAGRKPWSTSANLAVPDHNVPTTNRSSGINGISDPISKLQIETLDKNCKTFGINEIPMNDIRQGIVHVVGPEQGFTLPGMSIVCGDSHTSTHGALGALAFGIGTSEVEHVLATGCLWQSKSKNFNIEVSGKLNKHVSAKDIALYIIGKIGTAGGTGHAIEFSGDTIQSLSIEGRMTLCNMAIEAGARVGMVAVDDKTIDYVKGRILAPSGAKWSKAVEYWHTLHSDKNAHFEKIAHFNAKDIKPQVTWGTSPEMVITIDGYIPNPANAKNHTEKVSWENALNYMQLTADIKISDIKIDKVFIGSCTNSRIEDLRIVASVLKDKKIANNIKLALVVPGSGLIKKQAEKEGLDKIFINSGFEWREAGCSMCLAMNADKLKVGERCISTSNRNFEGRQGQGSFTHLVSPAIAAASAITGHFSEVK</sequence>
<evidence type="ECO:0000255" key="1">
    <source>
        <dbReference type="HAMAP-Rule" id="MF_01026"/>
    </source>
</evidence>
<evidence type="ECO:0000305" key="2"/>
<gene>
    <name evidence="1" type="primary">leuC</name>
    <name type="ordered locus">Rmag_0372</name>
</gene>
<dbReference type="EC" id="4.2.1.33" evidence="1"/>
<dbReference type="EMBL" id="CP000488">
    <property type="protein sequence ID" value="ABL02143.1"/>
    <property type="status" value="ALT_INIT"/>
    <property type="molecule type" value="Genomic_DNA"/>
</dbReference>
<dbReference type="RefSeq" id="WP_024792211.1">
    <property type="nucleotide sequence ID" value="NC_008610.1"/>
</dbReference>
<dbReference type="SMR" id="A1AW36"/>
<dbReference type="STRING" id="413404.Rmag_0372"/>
<dbReference type="KEGG" id="rma:Rmag_0372"/>
<dbReference type="eggNOG" id="COG0065">
    <property type="taxonomic scope" value="Bacteria"/>
</dbReference>
<dbReference type="HOGENOM" id="CLU_006714_3_4_6"/>
<dbReference type="OrthoDB" id="9802769at2"/>
<dbReference type="UniPathway" id="UPA00048">
    <property type="reaction ID" value="UER00071"/>
</dbReference>
<dbReference type="Proteomes" id="UP000002587">
    <property type="component" value="Chromosome"/>
</dbReference>
<dbReference type="GO" id="GO:0003861">
    <property type="term" value="F:3-isopropylmalate dehydratase activity"/>
    <property type="evidence" value="ECO:0007669"/>
    <property type="project" value="UniProtKB-UniRule"/>
</dbReference>
<dbReference type="GO" id="GO:0051539">
    <property type="term" value="F:4 iron, 4 sulfur cluster binding"/>
    <property type="evidence" value="ECO:0007669"/>
    <property type="project" value="UniProtKB-KW"/>
</dbReference>
<dbReference type="GO" id="GO:0046872">
    <property type="term" value="F:metal ion binding"/>
    <property type="evidence" value="ECO:0007669"/>
    <property type="project" value="UniProtKB-KW"/>
</dbReference>
<dbReference type="GO" id="GO:0009098">
    <property type="term" value="P:L-leucine biosynthetic process"/>
    <property type="evidence" value="ECO:0007669"/>
    <property type="project" value="UniProtKB-UniRule"/>
</dbReference>
<dbReference type="CDD" id="cd01583">
    <property type="entry name" value="IPMI"/>
    <property type="match status" value="1"/>
</dbReference>
<dbReference type="FunFam" id="3.30.499.10:FF:000007">
    <property type="entry name" value="3-isopropylmalate dehydratase large subunit"/>
    <property type="match status" value="1"/>
</dbReference>
<dbReference type="Gene3D" id="3.30.499.10">
    <property type="entry name" value="Aconitase, domain 3"/>
    <property type="match status" value="2"/>
</dbReference>
<dbReference type="HAMAP" id="MF_01026">
    <property type="entry name" value="LeuC_type1"/>
    <property type="match status" value="1"/>
</dbReference>
<dbReference type="InterPro" id="IPR004430">
    <property type="entry name" value="3-IsopropMal_deHydase_lsu"/>
</dbReference>
<dbReference type="InterPro" id="IPR015931">
    <property type="entry name" value="Acnase/IPM_dHydase_lsu_aba_1/3"/>
</dbReference>
<dbReference type="InterPro" id="IPR001030">
    <property type="entry name" value="Acoase/IPM_deHydtase_lsu_aba"/>
</dbReference>
<dbReference type="InterPro" id="IPR018136">
    <property type="entry name" value="Aconitase_4Fe-4S_BS"/>
</dbReference>
<dbReference type="InterPro" id="IPR036008">
    <property type="entry name" value="Aconitase_4Fe-4S_dom"/>
</dbReference>
<dbReference type="InterPro" id="IPR050067">
    <property type="entry name" value="IPM_dehydratase_rel_enz"/>
</dbReference>
<dbReference type="InterPro" id="IPR033941">
    <property type="entry name" value="IPMI_cat"/>
</dbReference>
<dbReference type="NCBIfam" id="TIGR00170">
    <property type="entry name" value="leuC"/>
    <property type="match status" value="1"/>
</dbReference>
<dbReference type="NCBIfam" id="NF004016">
    <property type="entry name" value="PRK05478.1"/>
    <property type="match status" value="1"/>
</dbReference>
<dbReference type="NCBIfam" id="NF009116">
    <property type="entry name" value="PRK12466.1"/>
    <property type="match status" value="1"/>
</dbReference>
<dbReference type="PANTHER" id="PTHR43822:SF9">
    <property type="entry name" value="3-ISOPROPYLMALATE DEHYDRATASE"/>
    <property type="match status" value="1"/>
</dbReference>
<dbReference type="PANTHER" id="PTHR43822">
    <property type="entry name" value="HOMOACONITASE, MITOCHONDRIAL-RELATED"/>
    <property type="match status" value="1"/>
</dbReference>
<dbReference type="Pfam" id="PF00330">
    <property type="entry name" value="Aconitase"/>
    <property type="match status" value="1"/>
</dbReference>
<dbReference type="PRINTS" id="PR00415">
    <property type="entry name" value="ACONITASE"/>
</dbReference>
<dbReference type="SUPFAM" id="SSF53732">
    <property type="entry name" value="Aconitase iron-sulfur domain"/>
    <property type="match status" value="1"/>
</dbReference>
<dbReference type="PROSITE" id="PS00450">
    <property type="entry name" value="ACONITASE_1"/>
    <property type="match status" value="1"/>
</dbReference>
<dbReference type="PROSITE" id="PS01244">
    <property type="entry name" value="ACONITASE_2"/>
    <property type="match status" value="1"/>
</dbReference>
<name>LEUC_RUTMC</name>
<protein>
    <recommendedName>
        <fullName evidence="1">3-isopropylmalate dehydratase large subunit</fullName>
        <ecNumber evidence="1">4.2.1.33</ecNumber>
    </recommendedName>
    <alternativeName>
        <fullName evidence="1">Alpha-IPM isomerase</fullName>
        <shortName evidence="1">IPMI</shortName>
    </alternativeName>
    <alternativeName>
        <fullName evidence="1">Isopropylmalate isomerase</fullName>
    </alternativeName>
</protein>
<feature type="chain" id="PRO_0000319837" description="3-isopropylmalate dehydratase large subunit">
    <location>
        <begin position="1"/>
        <end position="466"/>
    </location>
</feature>
<feature type="binding site" evidence="1">
    <location>
        <position position="349"/>
    </location>
    <ligand>
        <name>[4Fe-4S] cluster</name>
        <dbReference type="ChEBI" id="CHEBI:49883"/>
    </ligand>
</feature>
<feature type="binding site" evidence="1">
    <location>
        <position position="410"/>
    </location>
    <ligand>
        <name>[4Fe-4S] cluster</name>
        <dbReference type="ChEBI" id="CHEBI:49883"/>
    </ligand>
</feature>
<feature type="binding site" evidence="1">
    <location>
        <position position="413"/>
    </location>
    <ligand>
        <name>[4Fe-4S] cluster</name>
        <dbReference type="ChEBI" id="CHEBI:49883"/>
    </ligand>
</feature>
<proteinExistence type="inferred from homology"/>
<reference key="1">
    <citation type="journal article" date="2007" name="Science">
        <title>The Calyptogena magnifica chemoautotrophic symbiont genome.</title>
        <authorList>
            <person name="Newton I.L.G."/>
            <person name="Woyke T."/>
            <person name="Auchtung T.A."/>
            <person name="Dilly G.F."/>
            <person name="Dutton R.J."/>
            <person name="Fisher M.C."/>
            <person name="Fontanez K.M."/>
            <person name="Lau E."/>
            <person name="Stewart F.J."/>
            <person name="Richardson P.M."/>
            <person name="Barry K.W."/>
            <person name="Saunders E."/>
            <person name="Detter J.C."/>
            <person name="Wu D."/>
            <person name="Eisen J.A."/>
            <person name="Cavanaugh C.M."/>
        </authorList>
    </citation>
    <scope>NUCLEOTIDE SEQUENCE [LARGE SCALE GENOMIC DNA]</scope>
</reference>
<organism>
    <name type="scientific">Ruthia magnifica subsp. Calyptogena magnifica</name>
    <dbReference type="NCBI Taxonomy" id="413404"/>
    <lineage>
        <taxon>Bacteria</taxon>
        <taxon>Pseudomonadati</taxon>
        <taxon>Pseudomonadota</taxon>
        <taxon>Gammaproteobacteria</taxon>
        <taxon>Candidatus Pseudothioglobaceae</taxon>
        <taxon>Candidatus Ruthturnera</taxon>
    </lineage>
</organism>
<accession>A1AW36</accession>